<comment type="similarity">
    <text evidence="2">Belongs to the WD repeat GAD-1 family.</text>
</comment>
<comment type="sequence caution" evidence="2">
    <conflict type="erroneous initiation">
        <sequence resource="EMBL-CDS" id="CAC21644"/>
    </conflict>
</comment>
<gene>
    <name type="primary">WDR70</name>
</gene>
<name>WDR70_HUMAN</name>
<evidence type="ECO:0000256" key="1">
    <source>
        <dbReference type="SAM" id="MobiDB-lite"/>
    </source>
</evidence>
<evidence type="ECO:0000305" key="2"/>
<evidence type="ECO:0007744" key="3">
    <source>
    </source>
</evidence>
<evidence type="ECO:0007744" key="4">
    <source>
    </source>
</evidence>
<evidence type="ECO:0007744" key="5">
    <source>
    </source>
</evidence>
<evidence type="ECO:0007744" key="6">
    <source>
    </source>
</evidence>
<evidence type="ECO:0007744" key="7">
    <source>
    </source>
</evidence>
<evidence type="ECO:0007744" key="8">
    <source>
    </source>
</evidence>
<evidence type="ECO:0007744" key="9">
    <source>
    </source>
</evidence>
<evidence type="ECO:0007744" key="10">
    <source>
    </source>
</evidence>
<evidence type="ECO:0007744" key="11">
    <source>
    </source>
</evidence>
<evidence type="ECO:0007829" key="12">
    <source>
        <dbReference type="PDB" id="6ZYM"/>
    </source>
</evidence>
<proteinExistence type="evidence at protein level"/>
<keyword id="KW-0002">3D-structure</keyword>
<keyword id="KW-0007">Acetylation</keyword>
<keyword id="KW-1017">Isopeptide bond</keyword>
<keyword id="KW-0597">Phosphoprotein</keyword>
<keyword id="KW-1267">Proteomics identification</keyword>
<keyword id="KW-1185">Reference proteome</keyword>
<keyword id="KW-0677">Repeat</keyword>
<keyword id="KW-0832">Ubl conjugation</keyword>
<keyword id="KW-0853">WD repeat</keyword>
<accession>Q9NW82</accession>
<accession>Q9H053</accession>
<organism>
    <name type="scientific">Homo sapiens</name>
    <name type="common">Human</name>
    <dbReference type="NCBI Taxonomy" id="9606"/>
    <lineage>
        <taxon>Eukaryota</taxon>
        <taxon>Metazoa</taxon>
        <taxon>Chordata</taxon>
        <taxon>Craniata</taxon>
        <taxon>Vertebrata</taxon>
        <taxon>Euteleostomi</taxon>
        <taxon>Mammalia</taxon>
        <taxon>Eutheria</taxon>
        <taxon>Euarchontoglires</taxon>
        <taxon>Primates</taxon>
        <taxon>Haplorrhini</taxon>
        <taxon>Catarrhini</taxon>
        <taxon>Hominidae</taxon>
        <taxon>Homo</taxon>
    </lineage>
</organism>
<dbReference type="EMBL" id="AK001095">
    <property type="protein sequence ID" value="BAA91502.1"/>
    <property type="molecule type" value="mRNA"/>
</dbReference>
<dbReference type="EMBL" id="AL512685">
    <property type="protein sequence ID" value="CAC21644.1"/>
    <property type="status" value="ALT_INIT"/>
    <property type="molecule type" value="mRNA"/>
</dbReference>
<dbReference type="EMBL" id="BC009648">
    <property type="protein sequence ID" value="AAH09648.1"/>
    <property type="molecule type" value="mRNA"/>
</dbReference>
<dbReference type="EMBL" id="BC025315">
    <property type="protein sequence ID" value="AAH25315.1"/>
    <property type="molecule type" value="mRNA"/>
</dbReference>
<dbReference type="CCDS" id="CCDS34147.1"/>
<dbReference type="RefSeq" id="NP_060504.1">
    <property type="nucleotide sequence ID" value="NM_018034.4"/>
</dbReference>
<dbReference type="PDB" id="6ZYM">
    <property type="method" value="EM"/>
    <property type="resolution" value="3.40 A"/>
    <property type="chains" value="p=1-654"/>
</dbReference>
<dbReference type="PDB" id="7A5P">
    <property type="method" value="EM"/>
    <property type="resolution" value="5.00 A"/>
    <property type="chains" value="p=1-654"/>
</dbReference>
<dbReference type="PDB" id="8I0W">
    <property type="method" value="EM"/>
    <property type="resolution" value="3.40 A"/>
    <property type="chains" value="1=1-654"/>
</dbReference>
<dbReference type="PDBsum" id="6ZYM"/>
<dbReference type="PDBsum" id="7A5P"/>
<dbReference type="PDBsum" id="8I0W"/>
<dbReference type="EMDB" id="EMD-11569"/>
<dbReference type="EMDB" id="EMD-35113"/>
<dbReference type="SMR" id="Q9NW82"/>
<dbReference type="BioGRID" id="120410">
    <property type="interactions" value="96"/>
</dbReference>
<dbReference type="FunCoup" id="Q9NW82">
    <property type="interactions" value="4083"/>
</dbReference>
<dbReference type="IntAct" id="Q9NW82">
    <property type="interactions" value="42"/>
</dbReference>
<dbReference type="MINT" id="Q9NW82"/>
<dbReference type="STRING" id="9606.ENSP00000265107"/>
<dbReference type="GlyGen" id="Q9NW82">
    <property type="glycosylation" value="1 site, 1 O-linked glycan (1 site)"/>
</dbReference>
<dbReference type="iPTMnet" id="Q9NW82"/>
<dbReference type="PhosphoSitePlus" id="Q9NW82"/>
<dbReference type="BioMuta" id="WDR70"/>
<dbReference type="DMDM" id="74761752"/>
<dbReference type="jPOST" id="Q9NW82"/>
<dbReference type="MassIVE" id="Q9NW82"/>
<dbReference type="PaxDb" id="9606-ENSP00000265107"/>
<dbReference type="PeptideAtlas" id="Q9NW82"/>
<dbReference type="ProteomicsDB" id="82913"/>
<dbReference type="Pumba" id="Q9NW82"/>
<dbReference type="Antibodypedia" id="23003">
    <property type="antibodies" value="33 antibodies from 13 providers"/>
</dbReference>
<dbReference type="DNASU" id="55100"/>
<dbReference type="Ensembl" id="ENST00000265107.9">
    <property type="protein sequence ID" value="ENSP00000265107.4"/>
    <property type="gene ID" value="ENSG00000082068.9"/>
</dbReference>
<dbReference type="GeneID" id="55100"/>
<dbReference type="KEGG" id="hsa:55100"/>
<dbReference type="MANE-Select" id="ENST00000265107.9">
    <property type="protein sequence ID" value="ENSP00000265107.4"/>
    <property type="RefSeq nucleotide sequence ID" value="NM_018034.4"/>
    <property type="RefSeq protein sequence ID" value="NP_060504.1"/>
</dbReference>
<dbReference type="UCSC" id="uc003jkv.4">
    <property type="organism name" value="human"/>
</dbReference>
<dbReference type="AGR" id="HGNC:25495"/>
<dbReference type="CTD" id="55100"/>
<dbReference type="DisGeNET" id="55100"/>
<dbReference type="GeneCards" id="WDR70"/>
<dbReference type="HGNC" id="HGNC:25495">
    <property type="gene designation" value="WDR70"/>
</dbReference>
<dbReference type="HPA" id="ENSG00000082068">
    <property type="expression patterns" value="Low tissue specificity"/>
</dbReference>
<dbReference type="neXtProt" id="NX_Q9NW82"/>
<dbReference type="OpenTargets" id="ENSG00000082068"/>
<dbReference type="PharmGKB" id="PA142670603"/>
<dbReference type="VEuPathDB" id="HostDB:ENSG00000082068"/>
<dbReference type="eggNOG" id="KOG0772">
    <property type="taxonomic scope" value="Eukaryota"/>
</dbReference>
<dbReference type="GeneTree" id="ENSGT00390000015433"/>
<dbReference type="HOGENOM" id="CLU_014033_1_2_1"/>
<dbReference type="InParanoid" id="Q9NW82"/>
<dbReference type="OMA" id="KGDQYIT"/>
<dbReference type="OrthoDB" id="10264376at2759"/>
<dbReference type="PAN-GO" id="Q9NW82">
    <property type="GO annotations" value="3 GO annotations based on evolutionary models"/>
</dbReference>
<dbReference type="PhylomeDB" id="Q9NW82"/>
<dbReference type="TreeFam" id="TF105809"/>
<dbReference type="PathwayCommons" id="Q9NW82"/>
<dbReference type="Reactome" id="R-HSA-72163">
    <property type="pathway name" value="mRNA Splicing - Major Pathway"/>
</dbReference>
<dbReference type="SignaLink" id="Q9NW82"/>
<dbReference type="BioGRID-ORCS" id="55100">
    <property type="hits" value="781 hits in 1164 CRISPR screens"/>
</dbReference>
<dbReference type="ChiTaRS" id="WDR70">
    <property type="organism name" value="human"/>
</dbReference>
<dbReference type="GenomeRNAi" id="55100"/>
<dbReference type="Pharos" id="Q9NW82">
    <property type="development level" value="Tdark"/>
</dbReference>
<dbReference type="PRO" id="PR:Q9NW82"/>
<dbReference type="Proteomes" id="UP000005640">
    <property type="component" value="Chromosome 5"/>
</dbReference>
<dbReference type="RNAct" id="Q9NW82">
    <property type="molecule type" value="protein"/>
</dbReference>
<dbReference type="Bgee" id="ENSG00000082068">
    <property type="expression patterns" value="Expressed in sural nerve and 189 other cell types or tissues"/>
</dbReference>
<dbReference type="ExpressionAtlas" id="Q9NW82">
    <property type="expression patterns" value="baseline and differential"/>
</dbReference>
<dbReference type="GO" id="GO:0005654">
    <property type="term" value="C:nucleoplasm"/>
    <property type="evidence" value="ECO:0000304"/>
    <property type="project" value="Reactome"/>
</dbReference>
<dbReference type="GO" id="GO:0005634">
    <property type="term" value="C:nucleus"/>
    <property type="evidence" value="ECO:0000318"/>
    <property type="project" value="GO_Central"/>
</dbReference>
<dbReference type="GO" id="GO:0035861">
    <property type="term" value="C:site of double-strand break"/>
    <property type="evidence" value="ECO:0000318"/>
    <property type="project" value="GO_Central"/>
</dbReference>
<dbReference type="GO" id="GO:0019899">
    <property type="term" value="F:enzyme binding"/>
    <property type="evidence" value="ECO:0000353"/>
    <property type="project" value="UniProtKB"/>
</dbReference>
<dbReference type="FunFam" id="2.130.10.10:FF:000501">
    <property type="entry name" value="WD repeat domain 70"/>
    <property type="match status" value="1"/>
</dbReference>
<dbReference type="FunFam" id="2.130.10.10:FF:000294">
    <property type="entry name" value="WD repeat-containing protein 70"/>
    <property type="match status" value="1"/>
</dbReference>
<dbReference type="Gene3D" id="2.130.10.10">
    <property type="entry name" value="YVTN repeat-like/Quinoprotein amine dehydrogenase"/>
    <property type="match status" value="3"/>
</dbReference>
<dbReference type="InterPro" id="IPR015943">
    <property type="entry name" value="WD40/YVTN_repeat-like_dom_sf"/>
</dbReference>
<dbReference type="InterPro" id="IPR036322">
    <property type="entry name" value="WD40_repeat_dom_sf"/>
</dbReference>
<dbReference type="InterPro" id="IPR001680">
    <property type="entry name" value="WD40_rpt"/>
</dbReference>
<dbReference type="InterPro" id="IPR051858">
    <property type="entry name" value="WD_repeat_GAD-1"/>
</dbReference>
<dbReference type="PANTHER" id="PTHR16017">
    <property type="entry name" value="GASTRULATION DEFECTIVE PROTEIN 1-RELATED"/>
    <property type="match status" value="1"/>
</dbReference>
<dbReference type="PANTHER" id="PTHR16017:SF0">
    <property type="entry name" value="WD REPEAT-CONTAINING PROTEIN 70"/>
    <property type="match status" value="1"/>
</dbReference>
<dbReference type="Pfam" id="PF00400">
    <property type="entry name" value="WD40"/>
    <property type="match status" value="3"/>
</dbReference>
<dbReference type="SMART" id="SM00320">
    <property type="entry name" value="WD40"/>
    <property type="match status" value="6"/>
</dbReference>
<dbReference type="SUPFAM" id="SSF50978">
    <property type="entry name" value="WD40 repeat-like"/>
    <property type="match status" value="1"/>
</dbReference>
<dbReference type="PROSITE" id="PS00678">
    <property type="entry name" value="WD_REPEATS_1"/>
    <property type="match status" value="1"/>
</dbReference>
<dbReference type="PROSITE" id="PS50082">
    <property type="entry name" value="WD_REPEATS_2"/>
    <property type="match status" value="3"/>
</dbReference>
<dbReference type="PROSITE" id="PS50294">
    <property type="entry name" value="WD_REPEATS_REGION"/>
    <property type="match status" value="1"/>
</dbReference>
<sequence>MERSGPSEVTGSDASGPDPQLAVTMGFTGFGKKARTFDLEAMFEQTRRTAVERSRKTLEAREKEEEMNREKELRRQNEDIEPTSSRSNVVRDCSKSSSRDTSSSESEQSSDSSDDELIGPPLPPKMVGKPVNFMEEDILGPLPPPLNEEEEEAEEEEEEEEEEENPVHKIPDSHEITLKHGTKTVSALGLDPSGARLVTGGYDYDVKFWDFAGMDASFKAFRSLQPCECHQIKSLQYSNTGDMILVVSGSSQAKVIDRDGFEVMECIKGDQYIVDMANTKGHTAMLHTGSWHPKIKGEFMTCSNDATVRTWEVENPKKQKSVFKPRTMQGKKVIPTTCTYSRDGNLIAAACQNGSIQIWDRNLTVHPKFHYKQAHDSGTDTSCVTFSYDGNVLASRGGDDSLKLWDIRQFNKPLFSASGLPTMFPMTDCCFSPDDKLIVTGTSIQRGCGSGKLVFFERRTFQRVYEIDITDASVVRCLWHPKLNQIMVGTGNGLAKVYYDPNKSQRGAKLCVVKTQRKAKQAETLTQDYIITPHALPMFREPRQRSTRKQLEKDRLDPLKSHKPEPPVAGPGRGGRVGTHGGTLSSYIVKNIALDKTDDSNPREAILRHAKAAEDSPYWVSPAYSKTQPKTMFAQVESDDEEAKNEPEWKKRKI</sequence>
<protein>
    <recommendedName>
        <fullName>WD repeat-containing protein 70</fullName>
    </recommendedName>
</protein>
<feature type="chain" id="PRO_0000305144" description="WD repeat-containing protein 70">
    <location>
        <begin position="1"/>
        <end position="654"/>
    </location>
</feature>
<feature type="repeat" description="WD 1">
    <location>
        <begin position="180"/>
        <end position="219"/>
    </location>
</feature>
<feature type="repeat" description="WD 2">
    <location>
        <begin position="227"/>
        <end position="268"/>
    </location>
</feature>
<feature type="repeat" description="WD 3">
    <location>
        <begin position="281"/>
        <end position="321"/>
    </location>
</feature>
<feature type="repeat" description="WD 4">
    <location>
        <begin position="330"/>
        <end position="369"/>
    </location>
</feature>
<feature type="repeat" description="WD 5">
    <location>
        <begin position="376"/>
        <end position="415"/>
    </location>
</feature>
<feature type="repeat" description="WD 6">
    <location>
        <begin position="421"/>
        <end position="466"/>
    </location>
</feature>
<feature type="repeat" description="WD 7">
    <location>
        <begin position="469"/>
        <end position="508"/>
    </location>
</feature>
<feature type="region of interest" description="Disordered" evidence="1">
    <location>
        <begin position="1"/>
        <end position="26"/>
    </location>
</feature>
<feature type="region of interest" description="Disordered" evidence="1">
    <location>
        <begin position="43"/>
        <end position="175"/>
    </location>
</feature>
<feature type="region of interest" description="Disordered" evidence="1">
    <location>
        <begin position="540"/>
        <end position="579"/>
    </location>
</feature>
<feature type="region of interest" description="Disordered" evidence="1">
    <location>
        <begin position="630"/>
        <end position="654"/>
    </location>
</feature>
<feature type="compositionally biased region" description="Basic and acidic residues" evidence="1">
    <location>
        <begin position="45"/>
        <end position="78"/>
    </location>
</feature>
<feature type="compositionally biased region" description="Low complexity" evidence="1">
    <location>
        <begin position="99"/>
        <end position="111"/>
    </location>
</feature>
<feature type="compositionally biased region" description="Acidic residues" evidence="1">
    <location>
        <begin position="147"/>
        <end position="164"/>
    </location>
</feature>
<feature type="compositionally biased region" description="Basic and acidic residues" evidence="1">
    <location>
        <begin position="165"/>
        <end position="175"/>
    </location>
</feature>
<feature type="compositionally biased region" description="Basic and acidic residues" evidence="1">
    <location>
        <begin position="540"/>
        <end position="565"/>
    </location>
</feature>
<feature type="compositionally biased region" description="Basic and acidic residues" evidence="1">
    <location>
        <begin position="644"/>
        <end position="654"/>
    </location>
</feature>
<feature type="modified residue" description="N6-acetyllysine" evidence="5">
    <location>
        <position position="452"/>
    </location>
</feature>
<feature type="modified residue" description="Phosphothreonine" evidence="9">
    <location>
        <position position="579"/>
    </location>
</feature>
<feature type="modified residue" description="Phosphoserine" evidence="3 9">
    <location>
        <position position="621"/>
    </location>
</feature>
<feature type="modified residue" description="Phosphoserine" evidence="4 6 7 8 9">
    <location>
        <position position="638"/>
    </location>
</feature>
<feature type="cross-link" description="Glycyl lysine isopeptide (Lys-Gly) (interchain with G-Cter in SUMO2)" evidence="10">
    <location>
        <position position="296"/>
    </location>
</feature>
<feature type="cross-link" description="Glycyl lysine isopeptide (Lys-Gly) (interchain with G-Cter in SUMO2)" evidence="11">
    <location>
        <position position="590"/>
    </location>
</feature>
<feature type="cross-link" description="Glycyl lysine isopeptide (Lys-Gly) (interchain with G-Cter in SUMO2)" evidence="11">
    <location>
        <position position="596"/>
    </location>
</feature>
<feature type="strand" evidence="12">
    <location>
        <begin position="176"/>
        <end position="179"/>
    </location>
</feature>
<feature type="strand" evidence="12">
    <location>
        <begin position="185"/>
        <end position="189"/>
    </location>
</feature>
<feature type="strand" evidence="12">
    <location>
        <begin position="192"/>
        <end position="194"/>
    </location>
</feature>
<feature type="strand" evidence="12">
    <location>
        <begin position="197"/>
        <end position="201"/>
    </location>
</feature>
<feature type="strand" evidence="12">
    <location>
        <begin position="206"/>
        <end position="209"/>
    </location>
</feature>
<feature type="strand" evidence="12">
    <location>
        <begin position="221"/>
        <end position="224"/>
    </location>
</feature>
<feature type="strand" evidence="12">
    <location>
        <begin position="232"/>
        <end position="234"/>
    </location>
</feature>
<feature type="strand" evidence="12">
    <location>
        <begin position="239"/>
        <end position="242"/>
    </location>
</feature>
<feature type="strand" evidence="12">
    <location>
        <begin position="247"/>
        <end position="252"/>
    </location>
</feature>
<feature type="strand" evidence="12">
    <location>
        <begin position="286"/>
        <end position="291"/>
    </location>
</feature>
<feature type="strand" evidence="12">
    <location>
        <begin position="295"/>
        <end position="297"/>
    </location>
</feature>
<feature type="strand" evidence="12">
    <location>
        <begin position="299"/>
        <end position="303"/>
    </location>
</feature>
<feature type="turn" evidence="12">
    <location>
        <begin position="304"/>
        <end position="306"/>
    </location>
</feature>
<feature type="strand" evidence="12">
    <location>
        <begin position="307"/>
        <end position="311"/>
    </location>
</feature>
<feature type="strand" evidence="12">
    <location>
        <begin position="316"/>
        <end position="318"/>
    </location>
</feature>
<feature type="strand" evidence="12">
    <location>
        <begin position="320"/>
        <end position="323"/>
    </location>
</feature>
<feature type="strand" evidence="12">
    <location>
        <begin position="328"/>
        <end position="330"/>
    </location>
</feature>
<feature type="strand" evidence="12">
    <location>
        <begin position="335"/>
        <end position="339"/>
    </location>
</feature>
<feature type="strand" evidence="12">
    <location>
        <begin position="342"/>
        <end position="345"/>
    </location>
</feature>
<feature type="strand" evidence="12">
    <location>
        <begin position="347"/>
        <end position="353"/>
    </location>
</feature>
<feature type="strand" evidence="12">
    <location>
        <begin position="356"/>
        <end position="359"/>
    </location>
</feature>
<feature type="strand" evidence="12">
    <location>
        <begin position="374"/>
        <end position="379"/>
    </location>
</feature>
<feature type="strand" evidence="12">
    <location>
        <begin position="384"/>
        <end position="386"/>
    </location>
</feature>
<feature type="strand" evidence="12">
    <location>
        <begin position="388"/>
        <end position="395"/>
    </location>
</feature>
<feature type="strand" evidence="12">
    <location>
        <begin position="403"/>
        <end position="405"/>
    </location>
</feature>
<feature type="strand" evidence="12">
    <location>
        <begin position="437"/>
        <end position="441"/>
    </location>
</feature>
<feature type="strand" evidence="12">
    <location>
        <begin position="446"/>
        <end position="448"/>
    </location>
</feature>
<feature type="strand" evidence="12">
    <location>
        <begin position="453"/>
        <end position="460"/>
    </location>
</feature>
<feature type="strand" evidence="12">
    <location>
        <begin position="476"/>
        <end position="479"/>
    </location>
</feature>
<feature type="strand" evidence="12">
    <location>
        <begin position="481"/>
        <end position="483"/>
    </location>
</feature>
<feature type="strand" evidence="12">
    <location>
        <begin position="486"/>
        <end position="489"/>
    </location>
</feature>
<feature type="strand" evidence="12">
    <location>
        <begin position="493"/>
        <end position="497"/>
    </location>
</feature>
<reference key="1">
    <citation type="journal article" date="2004" name="Nat. Genet.">
        <title>Complete sequencing and characterization of 21,243 full-length human cDNAs.</title>
        <authorList>
            <person name="Ota T."/>
            <person name="Suzuki Y."/>
            <person name="Nishikawa T."/>
            <person name="Otsuki T."/>
            <person name="Sugiyama T."/>
            <person name="Irie R."/>
            <person name="Wakamatsu A."/>
            <person name="Hayashi K."/>
            <person name="Sato H."/>
            <person name="Nagai K."/>
            <person name="Kimura K."/>
            <person name="Makita H."/>
            <person name="Sekine M."/>
            <person name="Obayashi M."/>
            <person name="Nishi T."/>
            <person name="Shibahara T."/>
            <person name="Tanaka T."/>
            <person name="Ishii S."/>
            <person name="Yamamoto J."/>
            <person name="Saito K."/>
            <person name="Kawai Y."/>
            <person name="Isono Y."/>
            <person name="Nakamura Y."/>
            <person name="Nagahari K."/>
            <person name="Murakami K."/>
            <person name="Yasuda T."/>
            <person name="Iwayanagi T."/>
            <person name="Wagatsuma M."/>
            <person name="Shiratori A."/>
            <person name="Sudo H."/>
            <person name="Hosoiri T."/>
            <person name="Kaku Y."/>
            <person name="Kodaira H."/>
            <person name="Kondo H."/>
            <person name="Sugawara M."/>
            <person name="Takahashi M."/>
            <person name="Kanda K."/>
            <person name="Yokoi T."/>
            <person name="Furuya T."/>
            <person name="Kikkawa E."/>
            <person name="Omura Y."/>
            <person name="Abe K."/>
            <person name="Kamihara K."/>
            <person name="Katsuta N."/>
            <person name="Sato K."/>
            <person name="Tanikawa M."/>
            <person name="Yamazaki M."/>
            <person name="Ninomiya K."/>
            <person name="Ishibashi T."/>
            <person name="Yamashita H."/>
            <person name="Murakawa K."/>
            <person name="Fujimori K."/>
            <person name="Tanai H."/>
            <person name="Kimata M."/>
            <person name="Watanabe M."/>
            <person name="Hiraoka S."/>
            <person name="Chiba Y."/>
            <person name="Ishida S."/>
            <person name="Ono Y."/>
            <person name="Takiguchi S."/>
            <person name="Watanabe S."/>
            <person name="Yosida M."/>
            <person name="Hotuta T."/>
            <person name="Kusano J."/>
            <person name="Kanehori K."/>
            <person name="Takahashi-Fujii A."/>
            <person name="Hara H."/>
            <person name="Tanase T.-O."/>
            <person name="Nomura Y."/>
            <person name="Togiya S."/>
            <person name="Komai F."/>
            <person name="Hara R."/>
            <person name="Takeuchi K."/>
            <person name="Arita M."/>
            <person name="Imose N."/>
            <person name="Musashino K."/>
            <person name="Yuuki H."/>
            <person name="Oshima A."/>
            <person name="Sasaki N."/>
            <person name="Aotsuka S."/>
            <person name="Yoshikawa Y."/>
            <person name="Matsunawa H."/>
            <person name="Ichihara T."/>
            <person name="Shiohata N."/>
            <person name="Sano S."/>
            <person name="Moriya S."/>
            <person name="Momiyama H."/>
            <person name="Satoh N."/>
            <person name="Takami S."/>
            <person name="Terashima Y."/>
            <person name="Suzuki O."/>
            <person name="Nakagawa S."/>
            <person name="Senoh A."/>
            <person name="Mizoguchi H."/>
            <person name="Goto Y."/>
            <person name="Shimizu F."/>
            <person name="Wakebe H."/>
            <person name="Hishigaki H."/>
            <person name="Watanabe T."/>
            <person name="Sugiyama A."/>
            <person name="Takemoto M."/>
            <person name="Kawakami B."/>
            <person name="Yamazaki M."/>
            <person name="Watanabe K."/>
            <person name="Kumagai A."/>
            <person name="Itakura S."/>
            <person name="Fukuzumi Y."/>
            <person name="Fujimori Y."/>
            <person name="Komiyama M."/>
            <person name="Tashiro H."/>
            <person name="Tanigami A."/>
            <person name="Fujiwara T."/>
            <person name="Ono T."/>
            <person name="Yamada K."/>
            <person name="Fujii Y."/>
            <person name="Ozaki K."/>
            <person name="Hirao M."/>
            <person name="Ohmori Y."/>
            <person name="Kawabata A."/>
            <person name="Hikiji T."/>
            <person name="Kobatake N."/>
            <person name="Inagaki H."/>
            <person name="Ikema Y."/>
            <person name="Okamoto S."/>
            <person name="Okitani R."/>
            <person name="Kawakami T."/>
            <person name="Noguchi S."/>
            <person name="Itoh T."/>
            <person name="Shigeta K."/>
            <person name="Senba T."/>
            <person name="Matsumura K."/>
            <person name="Nakajima Y."/>
            <person name="Mizuno T."/>
            <person name="Morinaga M."/>
            <person name="Sasaki M."/>
            <person name="Togashi T."/>
            <person name="Oyama M."/>
            <person name="Hata H."/>
            <person name="Watanabe M."/>
            <person name="Komatsu T."/>
            <person name="Mizushima-Sugano J."/>
            <person name="Satoh T."/>
            <person name="Shirai Y."/>
            <person name="Takahashi Y."/>
            <person name="Nakagawa K."/>
            <person name="Okumura K."/>
            <person name="Nagase T."/>
            <person name="Nomura N."/>
            <person name="Kikuchi H."/>
            <person name="Masuho Y."/>
            <person name="Yamashita R."/>
            <person name="Nakai K."/>
            <person name="Yada T."/>
            <person name="Nakamura Y."/>
            <person name="Ohara O."/>
            <person name="Isogai T."/>
            <person name="Sugano S."/>
        </authorList>
    </citation>
    <scope>NUCLEOTIDE SEQUENCE [LARGE SCALE MRNA]</scope>
    <source>
        <tissue>Embryo</tissue>
    </source>
</reference>
<reference key="2">
    <citation type="journal article" date="2007" name="BMC Genomics">
        <title>The full-ORF clone resource of the German cDNA consortium.</title>
        <authorList>
            <person name="Bechtel S."/>
            <person name="Rosenfelder H."/>
            <person name="Duda A."/>
            <person name="Schmidt C.P."/>
            <person name="Ernst U."/>
            <person name="Wellenreuther R."/>
            <person name="Mehrle A."/>
            <person name="Schuster C."/>
            <person name="Bahr A."/>
            <person name="Bloecker H."/>
            <person name="Heubner D."/>
            <person name="Hoerlein A."/>
            <person name="Michel G."/>
            <person name="Wedler H."/>
            <person name="Koehrer K."/>
            <person name="Ottenwaelder B."/>
            <person name="Poustka A."/>
            <person name="Wiemann S."/>
            <person name="Schupp I."/>
        </authorList>
    </citation>
    <scope>NUCLEOTIDE SEQUENCE [LARGE SCALE MRNA]</scope>
    <source>
        <tissue>Brain</tissue>
    </source>
</reference>
<reference key="3">
    <citation type="journal article" date="2004" name="Genome Res.">
        <title>The status, quality, and expansion of the NIH full-length cDNA project: the Mammalian Gene Collection (MGC).</title>
        <authorList>
            <consortium name="The MGC Project Team"/>
        </authorList>
    </citation>
    <scope>NUCLEOTIDE SEQUENCE [LARGE SCALE MRNA]</scope>
    <source>
        <tissue>Brain</tissue>
        <tissue>Placenta</tissue>
    </source>
</reference>
<reference key="4">
    <citation type="journal article" date="2006" name="Cell">
        <title>Global, in vivo, and site-specific phosphorylation dynamics in signaling networks.</title>
        <authorList>
            <person name="Olsen J.V."/>
            <person name="Blagoev B."/>
            <person name="Gnad F."/>
            <person name="Macek B."/>
            <person name="Kumar C."/>
            <person name="Mortensen P."/>
            <person name="Mann M."/>
        </authorList>
    </citation>
    <scope>PHOSPHORYLATION [LARGE SCALE ANALYSIS] AT SER-638</scope>
    <scope>IDENTIFICATION BY MASS SPECTROMETRY [LARGE SCALE ANALYSIS]</scope>
    <source>
        <tissue>Cervix carcinoma</tissue>
    </source>
</reference>
<reference key="5">
    <citation type="journal article" date="2006" name="Nat. Biotechnol.">
        <title>A probability-based approach for high-throughput protein phosphorylation analysis and site localization.</title>
        <authorList>
            <person name="Beausoleil S.A."/>
            <person name="Villen J."/>
            <person name="Gerber S.A."/>
            <person name="Rush J."/>
            <person name="Gygi S.P."/>
        </authorList>
    </citation>
    <scope>PHOSPHORYLATION [LARGE SCALE ANALYSIS] AT SER-621</scope>
    <scope>IDENTIFICATION BY MASS SPECTROMETRY [LARGE SCALE ANALYSIS]</scope>
    <source>
        <tissue>Cervix carcinoma</tissue>
    </source>
</reference>
<reference key="6">
    <citation type="journal article" date="2009" name="Anal. Chem.">
        <title>Lys-N and trypsin cover complementary parts of the phosphoproteome in a refined SCX-based approach.</title>
        <authorList>
            <person name="Gauci S."/>
            <person name="Helbig A.O."/>
            <person name="Slijper M."/>
            <person name="Krijgsveld J."/>
            <person name="Heck A.J."/>
            <person name="Mohammed S."/>
        </authorList>
    </citation>
    <scope>IDENTIFICATION BY MASS SPECTROMETRY [LARGE SCALE ANALYSIS]</scope>
</reference>
<reference key="7">
    <citation type="journal article" date="2009" name="Sci. Signal.">
        <title>Quantitative phosphoproteomic analysis of T cell receptor signaling reveals system-wide modulation of protein-protein interactions.</title>
        <authorList>
            <person name="Mayya V."/>
            <person name="Lundgren D.H."/>
            <person name="Hwang S.-I."/>
            <person name="Rezaul K."/>
            <person name="Wu L."/>
            <person name="Eng J.K."/>
            <person name="Rodionov V."/>
            <person name="Han D.K."/>
        </authorList>
    </citation>
    <scope>PHOSPHORYLATION [LARGE SCALE ANALYSIS] AT SER-638</scope>
    <scope>IDENTIFICATION BY MASS SPECTROMETRY [LARGE SCALE ANALYSIS]</scope>
    <source>
        <tissue>Leukemic T-cell</tissue>
    </source>
</reference>
<reference key="8">
    <citation type="journal article" date="2009" name="Science">
        <title>Lysine acetylation targets protein complexes and co-regulates major cellular functions.</title>
        <authorList>
            <person name="Choudhary C."/>
            <person name="Kumar C."/>
            <person name="Gnad F."/>
            <person name="Nielsen M.L."/>
            <person name="Rehman M."/>
            <person name="Walther T.C."/>
            <person name="Olsen J.V."/>
            <person name="Mann M."/>
        </authorList>
    </citation>
    <scope>ACETYLATION [LARGE SCALE ANALYSIS] AT LYS-452</scope>
    <scope>IDENTIFICATION BY MASS SPECTROMETRY [LARGE SCALE ANALYSIS]</scope>
</reference>
<reference key="9">
    <citation type="journal article" date="2010" name="Sci. Signal.">
        <title>Quantitative phosphoproteomics reveals widespread full phosphorylation site occupancy during mitosis.</title>
        <authorList>
            <person name="Olsen J.V."/>
            <person name="Vermeulen M."/>
            <person name="Santamaria A."/>
            <person name="Kumar C."/>
            <person name="Miller M.L."/>
            <person name="Jensen L.J."/>
            <person name="Gnad F."/>
            <person name="Cox J."/>
            <person name="Jensen T.S."/>
            <person name="Nigg E.A."/>
            <person name="Brunak S."/>
            <person name="Mann M."/>
        </authorList>
    </citation>
    <scope>PHOSPHORYLATION [LARGE SCALE ANALYSIS] AT SER-638</scope>
    <scope>IDENTIFICATION BY MASS SPECTROMETRY [LARGE SCALE ANALYSIS]</scope>
    <source>
        <tissue>Cervix carcinoma</tissue>
    </source>
</reference>
<reference key="10">
    <citation type="journal article" date="2011" name="BMC Syst. Biol.">
        <title>Initial characterization of the human central proteome.</title>
        <authorList>
            <person name="Burkard T.R."/>
            <person name="Planyavsky M."/>
            <person name="Kaupe I."/>
            <person name="Breitwieser F.P."/>
            <person name="Buerckstuemmer T."/>
            <person name="Bennett K.L."/>
            <person name="Superti-Furga G."/>
            <person name="Colinge J."/>
        </authorList>
    </citation>
    <scope>IDENTIFICATION BY MASS SPECTROMETRY [LARGE SCALE ANALYSIS]</scope>
</reference>
<reference key="11">
    <citation type="journal article" date="2011" name="Sci. Signal.">
        <title>System-wide temporal characterization of the proteome and phosphoproteome of human embryonic stem cell differentiation.</title>
        <authorList>
            <person name="Rigbolt K.T."/>
            <person name="Prokhorova T.A."/>
            <person name="Akimov V."/>
            <person name="Henningsen J."/>
            <person name="Johansen P.T."/>
            <person name="Kratchmarova I."/>
            <person name="Kassem M."/>
            <person name="Mann M."/>
            <person name="Olsen J.V."/>
            <person name="Blagoev B."/>
        </authorList>
    </citation>
    <scope>PHOSPHORYLATION [LARGE SCALE ANALYSIS] AT SER-638</scope>
    <scope>IDENTIFICATION BY MASS SPECTROMETRY [LARGE SCALE ANALYSIS]</scope>
</reference>
<reference key="12">
    <citation type="journal article" date="2013" name="J. Proteome Res.">
        <title>Toward a comprehensive characterization of a human cancer cell phosphoproteome.</title>
        <authorList>
            <person name="Zhou H."/>
            <person name="Di Palma S."/>
            <person name="Preisinger C."/>
            <person name="Peng M."/>
            <person name="Polat A.N."/>
            <person name="Heck A.J."/>
            <person name="Mohammed S."/>
        </authorList>
    </citation>
    <scope>PHOSPHORYLATION [LARGE SCALE ANALYSIS] AT THR-579; SER-621 AND SER-638</scope>
    <scope>IDENTIFICATION BY MASS SPECTROMETRY [LARGE SCALE ANALYSIS]</scope>
    <source>
        <tissue>Cervix carcinoma</tissue>
        <tissue>Erythroleukemia</tissue>
    </source>
</reference>
<reference key="13">
    <citation type="journal article" date="2014" name="Nat. Struct. Mol. Biol.">
        <title>Uncovering global SUMOylation signaling networks in a site-specific manner.</title>
        <authorList>
            <person name="Hendriks I.A."/>
            <person name="D'Souza R.C."/>
            <person name="Yang B."/>
            <person name="Verlaan-de Vries M."/>
            <person name="Mann M."/>
            <person name="Vertegaal A.C."/>
        </authorList>
    </citation>
    <scope>SUMOYLATION [LARGE SCALE ANALYSIS] AT LYS-296</scope>
    <scope>IDENTIFICATION BY MASS SPECTROMETRY [LARGE SCALE ANALYSIS]</scope>
</reference>
<reference key="14">
    <citation type="journal article" date="2017" name="Nat. Struct. Mol. Biol.">
        <title>Site-specific mapping of the human SUMO proteome reveals co-modification with phosphorylation.</title>
        <authorList>
            <person name="Hendriks I.A."/>
            <person name="Lyon D."/>
            <person name="Young C."/>
            <person name="Jensen L.J."/>
            <person name="Vertegaal A.C."/>
            <person name="Nielsen M.L."/>
        </authorList>
    </citation>
    <scope>SUMOYLATION [LARGE SCALE ANALYSIS] AT LYS-590 AND LYS-596</scope>
    <scope>IDENTIFICATION BY MASS SPECTROMETRY [LARGE SCALE ANALYSIS]</scope>
</reference>